<organism>
    <name type="scientific">Mannheimia succiniciproducens (strain KCTC 0769BP / MBEL55E)</name>
    <dbReference type="NCBI Taxonomy" id="221988"/>
    <lineage>
        <taxon>Bacteria</taxon>
        <taxon>Pseudomonadati</taxon>
        <taxon>Pseudomonadota</taxon>
        <taxon>Gammaproteobacteria</taxon>
        <taxon>Pasteurellales</taxon>
        <taxon>Pasteurellaceae</taxon>
        <taxon>Basfia</taxon>
    </lineage>
</organism>
<name>SYV_MANSM</name>
<protein>
    <recommendedName>
        <fullName evidence="1">Valine--tRNA ligase</fullName>
        <ecNumber evidence="1">6.1.1.9</ecNumber>
    </recommendedName>
    <alternativeName>
        <fullName evidence="1">Valyl-tRNA synthetase</fullName>
        <shortName evidence="1">ValRS</shortName>
    </alternativeName>
</protein>
<proteinExistence type="inferred from homology"/>
<reference key="1">
    <citation type="journal article" date="2004" name="Nat. Biotechnol.">
        <title>The genome sequence of the capnophilic rumen bacterium Mannheimia succiniciproducens.</title>
        <authorList>
            <person name="Hong S.H."/>
            <person name="Kim J.S."/>
            <person name="Lee S.Y."/>
            <person name="In Y.H."/>
            <person name="Choi S.S."/>
            <person name="Rih J.-K."/>
            <person name="Kim C.H."/>
            <person name="Jeong H."/>
            <person name="Hur C.G."/>
            <person name="Kim J.J."/>
        </authorList>
    </citation>
    <scope>NUCLEOTIDE SEQUENCE [LARGE SCALE GENOMIC DNA]</scope>
    <source>
        <strain>KCTC 0769BP / MBEL55E</strain>
    </source>
</reference>
<sequence>MTQKLQMADRFDASAVEQALYNHWEQKGYFKPSYDAGRPSYSIAIPPPNVTGSLHMGHAFQQTLMDTLIRYHRMQGDNTLWQAGTDHAGIATQMVVERKIAAEENKTRHDYGREAFIEKIWDWKAYSGGTISQQMRRLGNSIDWERERFTMDEGLSEAVKEVFVRLHEEGLIYRGKRLVNWDPKLHTAISDLEVENKESKGSLWHFRYPLAKGAKTAEGLDYLVVATTRPETVLGDTAVAVHPEDERYQSLIGKTVVLPLANREIPIVADEYVDREFGTGVVKITPAHDFNDYEVGKRHNLPMVNVMTFNADIREEAEIIGTDGQPLTTYEAEIPQDYRGLERFAARKKVVADFDSLGLLEKIQPHDLKVPYGDRGGVPIEPMLTDQWYVSVKPLAETAIKAVEEGEIQFVPKQYENLYYSWMRDIQDWCISRQLWWGHRIPAWYDEQGNVYVGRSEEEVRSKNGLNSSVALRQDEDVLDTWFSSALWTFSTLGWPQQTKELAMFHPTNVLITGFDIIFFWVARMIMMTMHFIKDENGKPQVPFKTVYVTGLIRDEQGQKMSKSKGNVIDPLDMIDGIDLESLLAKRTGNMMQPQLAEKIAKATKKEFPEGIQPHGTDALRFTLSALASTGRDINWDMKRLEGYRNFCNKLWNASRFVLTNDKLDLSTGERELSLADKWIQAEFNKTVQNFRNALDQYRFDLAATELYEFTWNQFCDWYLELTKPVFANGTDAQIRAASFTLVNVLEKLLRLAHPLIPFITEEIWQKVKDFAGVEGETIMTQPFPAFDEALVNDEAVAQISWIKEVITAVRNIRAESNIAPSKGLDLLLRNLPDTEQKTLENNRTLMQIMAKLDSVKVLAQDEEAPLSVAKLVGSAELLVPMAGFINKDTELARLNKEIEKLIGEVKRIEGKLGNEAFVAKAPEAVIAKEREKMQDYQEGLEKLRAQYLSIENL</sequence>
<evidence type="ECO:0000255" key="1">
    <source>
        <dbReference type="HAMAP-Rule" id="MF_02004"/>
    </source>
</evidence>
<feature type="chain" id="PRO_0000224502" description="Valine--tRNA ligase">
    <location>
        <begin position="1"/>
        <end position="954"/>
    </location>
</feature>
<feature type="coiled-coil region" evidence="1">
    <location>
        <begin position="886"/>
        <end position="954"/>
    </location>
</feature>
<feature type="short sequence motif" description="'HIGH' region">
    <location>
        <begin position="48"/>
        <end position="58"/>
    </location>
</feature>
<feature type="short sequence motif" description="'KMSKS' region">
    <location>
        <begin position="560"/>
        <end position="564"/>
    </location>
</feature>
<feature type="binding site" evidence="1">
    <location>
        <position position="563"/>
    </location>
    <ligand>
        <name>ATP</name>
        <dbReference type="ChEBI" id="CHEBI:30616"/>
    </ligand>
</feature>
<comment type="function">
    <text evidence="1">Catalyzes the attachment of valine to tRNA(Val). As ValRS can inadvertently accommodate and process structurally similar amino acids such as threonine, to avoid such errors, it has a 'posttransfer' editing activity that hydrolyzes mischarged Thr-tRNA(Val) in a tRNA-dependent manner.</text>
</comment>
<comment type="catalytic activity">
    <reaction evidence="1">
        <text>tRNA(Val) + L-valine + ATP = L-valyl-tRNA(Val) + AMP + diphosphate</text>
        <dbReference type="Rhea" id="RHEA:10704"/>
        <dbReference type="Rhea" id="RHEA-COMP:9672"/>
        <dbReference type="Rhea" id="RHEA-COMP:9708"/>
        <dbReference type="ChEBI" id="CHEBI:30616"/>
        <dbReference type="ChEBI" id="CHEBI:33019"/>
        <dbReference type="ChEBI" id="CHEBI:57762"/>
        <dbReference type="ChEBI" id="CHEBI:78442"/>
        <dbReference type="ChEBI" id="CHEBI:78537"/>
        <dbReference type="ChEBI" id="CHEBI:456215"/>
        <dbReference type="EC" id="6.1.1.9"/>
    </reaction>
</comment>
<comment type="subunit">
    <text evidence="1">Monomer.</text>
</comment>
<comment type="subcellular location">
    <subcellularLocation>
        <location evidence="1">Cytoplasm</location>
    </subcellularLocation>
</comment>
<comment type="domain">
    <text evidence="1">ValRS has two distinct active sites: one for aminoacylation and one for editing. The misactivated threonine is translocated from the active site to the editing site.</text>
</comment>
<comment type="domain">
    <text evidence="1">The C-terminal coiled-coil domain is crucial for aminoacylation activity.</text>
</comment>
<comment type="similarity">
    <text evidence="1">Belongs to the class-I aminoacyl-tRNA synthetase family. ValS type 1 subfamily.</text>
</comment>
<keyword id="KW-0030">Aminoacyl-tRNA synthetase</keyword>
<keyword id="KW-0067">ATP-binding</keyword>
<keyword id="KW-0175">Coiled coil</keyword>
<keyword id="KW-0963">Cytoplasm</keyword>
<keyword id="KW-0436">Ligase</keyword>
<keyword id="KW-0547">Nucleotide-binding</keyword>
<keyword id="KW-0648">Protein biosynthesis</keyword>
<dbReference type="EC" id="6.1.1.9" evidence="1"/>
<dbReference type="EMBL" id="AE016827">
    <property type="protein sequence ID" value="AAU38163.1"/>
    <property type="molecule type" value="Genomic_DNA"/>
</dbReference>
<dbReference type="RefSeq" id="WP_011200728.1">
    <property type="nucleotide sequence ID" value="NC_006300.1"/>
</dbReference>
<dbReference type="SMR" id="Q65S97"/>
<dbReference type="STRING" id="221988.MS1556"/>
<dbReference type="KEGG" id="msu:MS1556"/>
<dbReference type="eggNOG" id="COG0525">
    <property type="taxonomic scope" value="Bacteria"/>
</dbReference>
<dbReference type="HOGENOM" id="CLU_001493_0_2_6"/>
<dbReference type="OrthoDB" id="9810365at2"/>
<dbReference type="Proteomes" id="UP000000607">
    <property type="component" value="Chromosome"/>
</dbReference>
<dbReference type="GO" id="GO:0005829">
    <property type="term" value="C:cytosol"/>
    <property type="evidence" value="ECO:0007669"/>
    <property type="project" value="TreeGrafter"/>
</dbReference>
<dbReference type="GO" id="GO:0002161">
    <property type="term" value="F:aminoacyl-tRNA deacylase activity"/>
    <property type="evidence" value="ECO:0007669"/>
    <property type="project" value="InterPro"/>
</dbReference>
<dbReference type="GO" id="GO:0005524">
    <property type="term" value="F:ATP binding"/>
    <property type="evidence" value="ECO:0007669"/>
    <property type="project" value="UniProtKB-UniRule"/>
</dbReference>
<dbReference type="GO" id="GO:0004832">
    <property type="term" value="F:valine-tRNA ligase activity"/>
    <property type="evidence" value="ECO:0007669"/>
    <property type="project" value="UniProtKB-UniRule"/>
</dbReference>
<dbReference type="GO" id="GO:0006438">
    <property type="term" value="P:valyl-tRNA aminoacylation"/>
    <property type="evidence" value="ECO:0007669"/>
    <property type="project" value="UniProtKB-UniRule"/>
</dbReference>
<dbReference type="CDD" id="cd07962">
    <property type="entry name" value="Anticodon_Ia_Val"/>
    <property type="match status" value="1"/>
</dbReference>
<dbReference type="CDD" id="cd00817">
    <property type="entry name" value="ValRS_core"/>
    <property type="match status" value="1"/>
</dbReference>
<dbReference type="FunFam" id="1.10.287.380:FF:000001">
    <property type="entry name" value="Valine--tRNA ligase"/>
    <property type="match status" value="1"/>
</dbReference>
<dbReference type="FunFam" id="1.10.730.10:FF:000007">
    <property type="entry name" value="Valine--tRNA ligase"/>
    <property type="match status" value="1"/>
</dbReference>
<dbReference type="FunFam" id="3.40.50.620:FF:000032">
    <property type="entry name" value="Valine--tRNA ligase"/>
    <property type="match status" value="1"/>
</dbReference>
<dbReference type="FunFam" id="3.40.50.620:FF:000146">
    <property type="entry name" value="Valine--tRNA ligase"/>
    <property type="match status" value="1"/>
</dbReference>
<dbReference type="FunFam" id="3.90.740.10:FF:000003">
    <property type="entry name" value="Valine--tRNA ligase"/>
    <property type="match status" value="1"/>
</dbReference>
<dbReference type="FunFam" id="3.90.740.10:FF:000004">
    <property type="entry name" value="Valine--tRNA ligase"/>
    <property type="match status" value="1"/>
</dbReference>
<dbReference type="Gene3D" id="3.40.50.620">
    <property type="entry name" value="HUPs"/>
    <property type="match status" value="2"/>
</dbReference>
<dbReference type="Gene3D" id="1.10.730.10">
    <property type="entry name" value="Isoleucyl-tRNA Synthetase, Domain 1"/>
    <property type="match status" value="1"/>
</dbReference>
<dbReference type="Gene3D" id="1.10.287.380">
    <property type="entry name" value="Valyl-tRNA synthetase, C-terminal domain"/>
    <property type="match status" value="1"/>
</dbReference>
<dbReference type="Gene3D" id="3.90.740.10">
    <property type="entry name" value="Valyl/Leucyl/Isoleucyl-tRNA synthetase, editing domain"/>
    <property type="match status" value="2"/>
</dbReference>
<dbReference type="HAMAP" id="MF_02004">
    <property type="entry name" value="Val_tRNA_synth_type1"/>
    <property type="match status" value="1"/>
</dbReference>
<dbReference type="InterPro" id="IPR001412">
    <property type="entry name" value="aa-tRNA-synth_I_CS"/>
</dbReference>
<dbReference type="InterPro" id="IPR002300">
    <property type="entry name" value="aa-tRNA-synth_Ia"/>
</dbReference>
<dbReference type="InterPro" id="IPR033705">
    <property type="entry name" value="Anticodon_Ia_Val"/>
</dbReference>
<dbReference type="InterPro" id="IPR013155">
    <property type="entry name" value="M/V/L/I-tRNA-synth_anticd-bd"/>
</dbReference>
<dbReference type="InterPro" id="IPR014729">
    <property type="entry name" value="Rossmann-like_a/b/a_fold"/>
</dbReference>
<dbReference type="InterPro" id="IPR010978">
    <property type="entry name" value="tRNA-bd_arm"/>
</dbReference>
<dbReference type="InterPro" id="IPR009080">
    <property type="entry name" value="tRNAsynth_Ia_anticodon-bd"/>
</dbReference>
<dbReference type="InterPro" id="IPR037118">
    <property type="entry name" value="Val-tRNA_synth_C_sf"/>
</dbReference>
<dbReference type="InterPro" id="IPR019499">
    <property type="entry name" value="Val-tRNA_synth_tRNA-bd"/>
</dbReference>
<dbReference type="InterPro" id="IPR009008">
    <property type="entry name" value="Val/Leu/Ile-tRNA-synth_edit"/>
</dbReference>
<dbReference type="InterPro" id="IPR002303">
    <property type="entry name" value="Valyl-tRNA_ligase"/>
</dbReference>
<dbReference type="NCBIfam" id="NF004349">
    <property type="entry name" value="PRK05729.1"/>
    <property type="match status" value="1"/>
</dbReference>
<dbReference type="NCBIfam" id="TIGR00422">
    <property type="entry name" value="valS"/>
    <property type="match status" value="1"/>
</dbReference>
<dbReference type="PANTHER" id="PTHR11946:SF93">
    <property type="entry name" value="VALINE--TRNA LIGASE, CHLOROPLASTIC_MITOCHONDRIAL 2"/>
    <property type="match status" value="1"/>
</dbReference>
<dbReference type="PANTHER" id="PTHR11946">
    <property type="entry name" value="VALYL-TRNA SYNTHETASES"/>
    <property type="match status" value="1"/>
</dbReference>
<dbReference type="Pfam" id="PF08264">
    <property type="entry name" value="Anticodon_1"/>
    <property type="match status" value="1"/>
</dbReference>
<dbReference type="Pfam" id="PF00133">
    <property type="entry name" value="tRNA-synt_1"/>
    <property type="match status" value="1"/>
</dbReference>
<dbReference type="Pfam" id="PF10458">
    <property type="entry name" value="Val_tRNA-synt_C"/>
    <property type="match status" value="1"/>
</dbReference>
<dbReference type="PRINTS" id="PR00986">
    <property type="entry name" value="TRNASYNTHVAL"/>
</dbReference>
<dbReference type="SUPFAM" id="SSF47323">
    <property type="entry name" value="Anticodon-binding domain of a subclass of class I aminoacyl-tRNA synthetases"/>
    <property type="match status" value="1"/>
</dbReference>
<dbReference type="SUPFAM" id="SSF52374">
    <property type="entry name" value="Nucleotidylyl transferase"/>
    <property type="match status" value="1"/>
</dbReference>
<dbReference type="SUPFAM" id="SSF46589">
    <property type="entry name" value="tRNA-binding arm"/>
    <property type="match status" value="1"/>
</dbReference>
<dbReference type="SUPFAM" id="SSF50677">
    <property type="entry name" value="ValRS/IleRS/LeuRS editing domain"/>
    <property type="match status" value="1"/>
</dbReference>
<dbReference type="PROSITE" id="PS00178">
    <property type="entry name" value="AA_TRNA_LIGASE_I"/>
    <property type="match status" value="1"/>
</dbReference>
<gene>
    <name evidence="1" type="primary">valS</name>
    <name type="ordered locus">MS1556</name>
</gene>
<accession>Q65S97</accession>